<gene>
    <name evidence="1" type="primary">aaeX</name>
    <name type="ordered locus">ESA_03630</name>
</gene>
<organism>
    <name type="scientific">Cronobacter sakazakii (strain ATCC BAA-894)</name>
    <name type="common">Enterobacter sakazakii</name>
    <dbReference type="NCBI Taxonomy" id="290339"/>
    <lineage>
        <taxon>Bacteria</taxon>
        <taxon>Pseudomonadati</taxon>
        <taxon>Pseudomonadota</taxon>
        <taxon>Gammaproteobacteria</taxon>
        <taxon>Enterobacterales</taxon>
        <taxon>Enterobacteriaceae</taxon>
        <taxon>Cronobacter</taxon>
    </lineage>
</organism>
<feature type="chain" id="PRO_1000068811" description="Protein AaeX">
    <location>
        <begin position="1"/>
        <end position="67"/>
    </location>
</feature>
<feature type="transmembrane region" description="Helical" evidence="1">
    <location>
        <begin position="3"/>
        <end position="23"/>
    </location>
</feature>
<feature type="transmembrane region" description="Helical" evidence="1">
    <location>
        <begin position="43"/>
        <end position="63"/>
    </location>
</feature>
<keyword id="KW-1003">Cell membrane</keyword>
<keyword id="KW-0472">Membrane</keyword>
<keyword id="KW-1185">Reference proteome</keyword>
<keyword id="KW-0812">Transmembrane</keyword>
<keyword id="KW-1133">Transmembrane helix</keyword>
<evidence type="ECO:0000255" key="1">
    <source>
        <dbReference type="HAMAP-Rule" id="MF_01546"/>
    </source>
</evidence>
<protein>
    <recommendedName>
        <fullName evidence="1">Protein AaeX</fullName>
    </recommendedName>
</protein>
<comment type="subcellular location">
    <subcellularLocation>
        <location evidence="1">Cell membrane</location>
        <topology evidence="1">Multi-pass membrane protein</topology>
    </subcellularLocation>
</comment>
<comment type="similarity">
    <text evidence="1">Belongs to the AaeX family.</text>
</comment>
<reference key="1">
    <citation type="journal article" date="2010" name="PLoS ONE">
        <title>Genome sequence of Cronobacter sakazakii BAA-894 and comparative genomic hybridization analysis with other Cronobacter species.</title>
        <authorList>
            <person name="Kucerova E."/>
            <person name="Clifton S.W."/>
            <person name="Xia X.Q."/>
            <person name="Long F."/>
            <person name="Porwollik S."/>
            <person name="Fulton L."/>
            <person name="Fronick C."/>
            <person name="Minx P."/>
            <person name="Kyung K."/>
            <person name="Warren W."/>
            <person name="Fulton R."/>
            <person name="Feng D."/>
            <person name="Wollam A."/>
            <person name="Shah N."/>
            <person name="Bhonagiri V."/>
            <person name="Nash W.E."/>
            <person name="Hallsworth-Pepin K."/>
            <person name="Wilson R.K."/>
            <person name="McClelland M."/>
            <person name="Forsythe S.J."/>
        </authorList>
    </citation>
    <scope>NUCLEOTIDE SEQUENCE [LARGE SCALE GENOMIC DNA]</scope>
    <source>
        <strain>ATCC BAA-894</strain>
    </source>
</reference>
<name>AAEX_CROS8</name>
<proteinExistence type="inferred from homology"/>
<dbReference type="EMBL" id="CP000783">
    <property type="protein sequence ID" value="ABU78840.1"/>
    <property type="molecule type" value="Genomic_DNA"/>
</dbReference>
<dbReference type="RefSeq" id="WP_004385128.1">
    <property type="nucleotide sequence ID" value="NC_009778.1"/>
</dbReference>
<dbReference type="GeneID" id="92808039"/>
<dbReference type="KEGG" id="esa:ESA_03630"/>
<dbReference type="HOGENOM" id="CLU_188292_0_0_6"/>
<dbReference type="Proteomes" id="UP000000260">
    <property type="component" value="Chromosome"/>
</dbReference>
<dbReference type="GO" id="GO:0005886">
    <property type="term" value="C:plasma membrane"/>
    <property type="evidence" value="ECO:0007669"/>
    <property type="project" value="UniProtKB-SubCell"/>
</dbReference>
<dbReference type="HAMAP" id="MF_01546">
    <property type="entry name" value="AaeX"/>
    <property type="match status" value="1"/>
</dbReference>
<dbReference type="InterPro" id="IPR012451">
    <property type="entry name" value="DUF1656"/>
</dbReference>
<dbReference type="NCBIfam" id="NF008615">
    <property type="entry name" value="PRK11594.1"/>
    <property type="match status" value="1"/>
</dbReference>
<dbReference type="Pfam" id="PF07869">
    <property type="entry name" value="DUF1656"/>
    <property type="match status" value="1"/>
</dbReference>
<sequence length="67" mass="7847">MSLFPVIVIFGLSFPPIFFELLLSLAIFWLVRRALIPTGIYDFVWHPALFNTALYCCLFYLLSRLFV</sequence>
<accession>A7MJB3</accession>